<feature type="chain" id="PRO_0000427045" description="Deoxyguanosinetriphosphate triphosphohydrolase-like protein">
    <location>
        <begin position="1"/>
        <end position="431"/>
    </location>
</feature>
<feature type="domain" description="HD" evidence="2">
    <location>
        <begin position="72"/>
        <end position="222"/>
    </location>
</feature>
<feature type="region of interest" description="Disordered" evidence="3">
    <location>
        <begin position="1"/>
        <end position="36"/>
    </location>
</feature>
<feature type="compositionally biased region" description="Basic and acidic residues" evidence="3">
    <location>
        <begin position="1"/>
        <end position="20"/>
    </location>
</feature>
<gene>
    <name type="primary">dgt</name>
    <name type="ordered locus">MT2409</name>
</gene>
<sequence length="431" mass="46926">MSASEHDPYDDFDRQRRVAEAPKTAGLPGTEGQYRSDFARDRARVLHSAALRRLADKTQVVGPREGDTPRTRLTHSLEVAQIGRGMAIGLGCDLDLVELAGLAHDIGHPPYGHNGERALDEVAASHGGFEGNAQNFRILTSLEPKVVDAQGLSAGLNLTRASLDAVTKYPWMRADGLGSQRRKFGFYDDDRESAVWVRQGAPPERACLEAQVMDWADDVAYSVHDVEDGVVSERIDLRVLAAEEDAAALARLGEREFSRVSADELMAAARRLSRLPVVAAVGKYDATLSASVALKRLTSELVGRFASAAIATTRAAAGPGPLVRFRADLQVPDLVRAEVAVLKILALQFIMSDPRHLETQARQRERIHRVAHRLYSGAPQTLDPVYAAAFNTAADDAARLRVVVDQIASYTEGRLERIDADQLGVSRNALD</sequence>
<reference key="1">
    <citation type="journal article" date="2002" name="J. Bacteriol.">
        <title>Whole-genome comparison of Mycobacterium tuberculosis clinical and laboratory strains.</title>
        <authorList>
            <person name="Fleischmann R.D."/>
            <person name="Alland D."/>
            <person name="Eisen J.A."/>
            <person name="Carpenter L."/>
            <person name="White O."/>
            <person name="Peterson J.D."/>
            <person name="DeBoy R.T."/>
            <person name="Dodson R.J."/>
            <person name="Gwinn M.L."/>
            <person name="Haft D.H."/>
            <person name="Hickey E.K."/>
            <person name="Kolonay J.F."/>
            <person name="Nelson W.C."/>
            <person name="Umayam L.A."/>
            <person name="Ermolaeva M.D."/>
            <person name="Salzberg S.L."/>
            <person name="Delcher A."/>
            <person name="Utterback T.R."/>
            <person name="Weidman J.F."/>
            <person name="Khouri H.M."/>
            <person name="Gill J."/>
            <person name="Mikula A."/>
            <person name="Bishai W."/>
            <person name="Jacobs W.R. Jr."/>
            <person name="Venter J.C."/>
            <person name="Fraser C.M."/>
        </authorList>
    </citation>
    <scope>NUCLEOTIDE SEQUENCE [LARGE SCALE GENOMIC DNA]</scope>
    <source>
        <strain>CDC 1551 / Oshkosh</strain>
    </source>
</reference>
<organism>
    <name type="scientific">Mycobacterium tuberculosis (strain CDC 1551 / Oshkosh)</name>
    <dbReference type="NCBI Taxonomy" id="83331"/>
    <lineage>
        <taxon>Bacteria</taxon>
        <taxon>Bacillati</taxon>
        <taxon>Actinomycetota</taxon>
        <taxon>Actinomycetes</taxon>
        <taxon>Mycobacteriales</taxon>
        <taxon>Mycobacteriaceae</taxon>
        <taxon>Mycobacterium</taxon>
        <taxon>Mycobacterium tuberculosis complex</taxon>
    </lineage>
</organism>
<evidence type="ECO:0000255" key="1">
    <source>
        <dbReference type="HAMAP-Rule" id="MF_01212"/>
    </source>
</evidence>
<evidence type="ECO:0000255" key="2">
    <source>
        <dbReference type="PROSITE-ProRule" id="PRU01175"/>
    </source>
</evidence>
<evidence type="ECO:0000256" key="3">
    <source>
        <dbReference type="SAM" id="MobiDB-lite"/>
    </source>
</evidence>
<protein>
    <recommendedName>
        <fullName evidence="1">Deoxyguanosinetriphosphate triphosphohydrolase-like protein</fullName>
    </recommendedName>
</protein>
<comment type="similarity">
    <text evidence="1">Belongs to the dGTPase family. Type 2 subfamily.</text>
</comment>
<dbReference type="EMBL" id="AE000516">
    <property type="protein sequence ID" value="AAK46702.1"/>
    <property type="molecule type" value="Genomic_DNA"/>
</dbReference>
<dbReference type="PIR" id="A70662">
    <property type="entry name" value="A70662"/>
</dbReference>
<dbReference type="RefSeq" id="WP_003917616.1">
    <property type="nucleotide sequence ID" value="NZ_KK341227.1"/>
</dbReference>
<dbReference type="SMR" id="P9WNY6"/>
<dbReference type="KEGG" id="mtc:MT2409"/>
<dbReference type="PATRIC" id="fig|83331.31.peg.2597"/>
<dbReference type="HOGENOM" id="CLU_028163_0_1_11"/>
<dbReference type="Proteomes" id="UP000001020">
    <property type="component" value="Chromosome"/>
</dbReference>
<dbReference type="GO" id="GO:0008832">
    <property type="term" value="F:dGTPase activity"/>
    <property type="evidence" value="ECO:0007669"/>
    <property type="project" value="TreeGrafter"/>
</dbReference>
<dbReference type="GO" id="GO:0006203">
    <property type="term" value="P:dGTP catabolic process"/>
    <property type="evidence" value="ECO:0007669"/>
    <property type="project" value="TreeGrafter"/>
</dbReference>
<dbReference type="CDD" id="cd00077">
    <property type="entry name" value="HDc"/>
    <property type="match status" value="1"/>
</dbReference>
<dbReference type="FunFam" id="1.10.3210.10:FF:000029">
    <property type="entry name" value="Deoxyguanosinetriphosphate triphosphohydrolase-like protein"/>
    <property type="match status" value="1"/>
</dbReference>
<dbReference type="Gene3D" id="1.10.3210.10">
    <property type="entry name" value="Hypothetical protein af1432"/>
    <property type="match status" value="1"/>
</dbReference>
<dbReference type="HAMAP" id="MF_01212">
    <property type="entry name" value="dGTPase_type2"/>
    <property type="match status" value="1"/>
</dbReference>
<dbReference type="InterPro" id="IPR006261">
    <property type="entry name" value="dGTPase"/>
</dbReference>
<dbReference type="InterPro" id="IPR050135">
    <property type="entry name" value="dGTPase-like"/>
</dbReference>
<dbReference type="InterPro" id="IPR023023">
    <property type="entry name" value="dNTPase_2"/>
</dbReference>
<dbReference type="InterPro" id="IPR003607">
    <property type="entry name" value="HD/PDEase_dom"/>
</dbReference>
<dbReference type="InterPro" id="IPR006674">
    <property type="entry name" value="HD_domain"/>
</dbReference>
<dbReference type="InterPro" id="IPR026875">
    <property type="entry name" value="PHydrolase_assoc_dom"/>
</dbReference>
<dbReference type="NCBIfam" id="TIGR01353">
    <property type="entry name" value="dGTP_triPase"/>
    <property type="match status" value="1"/>
</dbReference>
<dbReference type="NCBIfam" id="NF002829">
    <property type="entry name" value="PRK03007.1"/>
    <property type="match status" value="1"/>
</dbReference>
<dbReference type="PANTHER" id="PTHR11373:SF32">
    <property type="entry name" value="DEOXYGUANOSINETRIPHOSPHATE TRIPHOSPHOHYDROLASE"/>
    <property type="match status" value="1"/>
</dbReference>
<dbReference type="PANTHER" id="PTHR11373">
    <property type="entry name" value="DEOXYNUCLEOSIDE TRIPHOSPHATE TRIPHOSPHOHYDROLASE"/>
    <property type="match status" value="1"/>
</dbReference>
<dbReference type="Pfam" id="PF01966">
    <property type="entry name" value="HD"/>
    <property type="match status" value="1"/>
</dbReference>
<dbReference type="Pfam" id="PF13286">
    <property type="entry name" value="HD_assoc"/>
    <property type="match status" value="1"/>
</dbReference>
<dbReference type="SMART" id="SM00471">
    <property type="entry name" value="HDc"/>
    <property type="match status" value="1"/>
</dbReference>
<dbReference type="SUPFAM" id="SSF109604">
    <property type="entry name" value="HD-domain/PDEase-like"/>
    <property type="match status" value="1"/>
</dbReference>
<dbReference type="PROSITE" id="PS51831">
    <property type="entry name" value="HD"/>
    <property type="match status" value="1"/>
</dbReference>
<keyword id="KW-0378">Hydrolase</keyword>
<keyword id="KW-1185">Reference proteome</keyword>
<accession>P9WNY6</accession>
<accession>L0TC18</accession>
<accession>P0A540</accession>
<accession>P95240</accession>
<proteinExistence type="inferred from homology"/>
<name>DGTL1_MYCTO</name>